<gene>
    <name evidence="1" type="primary">proS</name>
    <name type="ordered locus">BMA2517</name>
</gene>
<reference key="1">
    <citation type="journal article" date="2004" name="Proc. Natl. Acad. Sci. U.S.A.">
        <title>Structural flexibility in the Burkholderia mallei genome.</title>
        <authorList>
            <person name="Nierman W.C."/>
            <person name="DeShazer D."/>
            <person name="Kim H.S."/>
            <person name="Tettelin H."/>
            <person name="Nelson K.E."/>
            <person name="Feldblyum T.V."/>
            <person name="Ulrich R.L."/>
            <person name="Ronning C.M."/>
            <person name="Brinkac L.M."/>
            <person name="Daugherty S.C."/>
            <person name="Davidsen T.D."/>
            <person name="DeBoy R.T."/>
            <person name="Dimitrov G."/>
            <person name="Dodson R.J."/>
            <person name="Durkin A.S."/>
            <person name="Gwinn M.L."/>
            <person name="Haft D.H."/>
            <person name="Khouri H.M."/>
            <person name="Kolonay J.F."/>
            <person name="Madupu R."/>
            <person name="Mohammoud Y."/>
            <person name="Nelson W.C."/>
            <person name="Radune D."/>
            <person name="Romero C.M."/>
            <person name="Sarria S."/>
            <person name="Selengut J."/>
            <person name="Shamblin C."/>
            <person name="Sullivan S.A."/>
            <person name="White O."/>
            <person name="Yu Y."/>
            <person name="Zafar N."/>
            <person name="Zhou L."/>
            <person name="Fraser C.M."/>
        </authorList>
    </citation>
    <scope>NUCLEOTIDE SEQUENCE [LARGE SCALE GENOMIC DNA]</scope>
    <source>
        <strain>ATCC 23344</strain>
    </source>
</reference>
<feature type="chain" id="PRO_0000248658" description="Proline--tRNA ligase">
    <location>
        <begin position="1"/>
        <end position="578"/>
    </location>
</feature>
<protein>
    <recommendedName>
        <fullName evidence="1">Proline--tRNA ligase</fullName>
        <ecNumber evidence="1">6.1.1.15</ecNumber>
    </recommendedName>
    <alternativeName>
        <fullName evidence="1">Prolyl-tRNA synthetase</fullName>
        <shortName evidence="1">ProRS</shortName>
    </alternativeName>
</protein>
<comment type="function">
    <text evidence="1">Catalyzes the attachment of proline to tRNA(Pro) in a two-step reaction: proline is first activated by ATP to form Pro-AMP and then transferred to the acceptor end of tRNA(Pro). As ProRS can inadvertently accommodate and process non-cognate amino acids such as alanine and cysteine, to avoid such errors it has two additional distinct editing activities against alanine. One activity is designated as 'pretransfer' editing and involves the tRNA(Pro)-independent hydrolysis of activated Ala-AMP. The other activity is designated 'posttransfer' editing and involves deacylation of mischarged Ala-tRNA(Pro). The misacylated Cys-tRNA(Pro) is not edited by ProRS.</text>
</comment>
<comment type="catalytic activity">
    <reaction evidence="1">
        <text>tRNA(Pro) + L-proline + ATP = L-prolyl-tRNA(Pro) + AMP + diphosphate</text>
        <dbReference type="Rhea" id="RHEA:14305"/>
        <dbReference type="Rhea" id="RHEA-COMP:9700"/>
        <dbReference type="Rhea" id="RHEA-COMP:9702"/>
        <dbReference type="ChEBI" id="CHEBI:30616"/>
        <dbReference type="ChEBI" id="CHEBI:33019"/>
        <dbReference type="ChEBI" id="CHEBI:60039"/>
        <dbReference type="ChEBI" id="CHEBI:78442"/>
        <dbReference type="ChEBI" id="CHEBI:78532"/>
        <dbReference type="ChEBI" id="CHEBI:456215"/>
        <dbReference type="EC" id="6.1.1.15"/>
    </reaction>
</comment>
<comment type="subunit">
    <text evidence="1">Homodimer.</text>
</comment>
<comment type="subcellular location">
    <subcellularLocation>
        <location evidence="1">Cytoplasm</location>
    </subcellularLocation>
</comment>
<comment type="domain">
    <text evidence="1">Consists of three domains: the N-terminal catalytic domain, the editing domain and the C-terminal anticodon-binding domain.</text>
</comment>
<comment type="similarity">
    <text evidence="1">Belongs to the class-II aminoacyl-tRNA synthetase family. ProS type 1 subfamily.</text>
</comment>
<accession>Q62GV8</accession>
<evidence type="ECO:0000255" key="1">
    <source>
        <dbReference type="HAMAP-Rule" id="MF_01569"/>
    </source>
</evidence>
<name>SYP_BURMA</name>
<keyword id="KW-0030">Aminoacyl-tRNA synthetase</keyword>
<keyword id="KW-0067">ATP-binding</keyword>
<keyword id="KW-0963">Cytoplasm</keyword>
<keyword id="KW-0436">Ligase</keyword>
<keyword id="KW-0547">Nucleotide-binding</keyword>
<keyword id="KW-0648">Protein biosynthesis</keyword>
<keyword id="KW-1185">Reference proteome</keyword>
<organism>
    <name type="scientific">Burkholderia mallei (strain ATCC 23344)</name>
    <dbReference type="NCBI Taxonomy" id="243160"/>
    <lineage>
        <taxon>Bacteria</taxon>
        <taxon>Pseudomonadati</taxon>
        <taxon>Pseudomonadota</taxon>
        <taxon>Betaproteobacteria</taxon>
        <taxon>Burkholderiales</taxon>
        <taxon>Burkholderiaceae</taxon>
        <taxon>Burkholderia</taxon>
        <taxon>pseudomallei group</taxon>
    </lineage>
</organism>
<dbReference type="EC" id="6.1.1.15" evidence="1"/>
<dbReference type="EMBL" id="CP000010">
    <property type="protein sequence ID" value="AAU50103.1"/>
    <property type="molecule type" value="Genomic_DNA"/>
</dbReference>
<dbReference type="RefSeq" id="WP_004195109.1">
    <property type="nucleotide sequence ID" value="NC_006348.1"/>
</dbReference>
<dbReference type="RefSeq" id="YP_104063.1">
    <property type="nucleotide sequence ID" value="NC_006348.1"/>
</dbReference>
<dbReference type="SMR" id="Q62GV8"/>
<dbReference type="GeneID" id="92980209"/>
<dbReference type="KEGG" id="bma:BMA2517"/>
<dbReference type="PATRIC" id="fig|243160.12.peg.2596"/>
<dbReference type="eggNOG" id="COG0442">
    <property type="taxonomic scope" value="Bacteria"/>
</dbReference>
<dbReference type="HOGENOM" id="CLU_016739_0_0_4"/>
<dbReference type="Proteomes" id="UP000006693">
    <property type="component" value="Chromosome 1"/>
</dbReference>
<dbReference type="GO" id="GO:0005829">
    <property type="term" value="C:cytosol"/>
    <property type="evidence" value="ECO:0007669"/>
    <property type="project" value="TreeGrafter"/>
</dbReference>
<dbReference type="GO" id="GO:0002161">
    <property type="term" value="F:aminoacyl-tRNA deacylase activity"/>
    <property type="evidence" value="ECO:0007669"/>
    <property type="project" value="InterPro"/>
</dbReference>
<dbReference type="GO" id="GO:0005524">
    <property type="term" value="F:ATP binding"/>
    <property type="evidence" value="ECO:0007669"/>
    <property type="project" value="UniProtKB-UniRule"/>
</dbReference>
<dbReference type="GO" id="GO:0004827">
    <property type="term" value="F:proline-tRNA ligase activity"/>
    <property type="evidence" value="ECO:0007669"/>
    <property type="project" value="UniProtKB-UniRule"/>
</dbReference>
<dbReference type="GO" id="GO:0006433">
    <property type="term" value="P:prolyl-tRNA aminoacylation"/>
    <property type="evidence" value="ECO:0007669"/>
    <property type="project" value="UniProtKB-UniRule"/>
</dbReference>
<dbReference type="CDD" id="cd04334">
    <property type="entry name" value="ProRS-INS"/>
    <property type="match status" value="1"/>
</dbReference>
<dbReference type="CDD" id="cd00861">
    <property type="entry name" value="ProRS_anticodon_short"/>
    <property type="match status" value="1"/>
</dbReference>
<dbReference type="CDD" id="cd00779">
    <property type="entry name" value="ProRS_core_prok"/>
    <property type="match status" value="1"/>
</dbReference>
<dbReference type="FunFam" id="3.30.930.10:FF:000043">
    <property type="entry name" value="Proline--tRNA ligase"/>
    <property type="match status" value="1"/>
</dbReference>
<dbReference type="FunFam" id="3.30.930.10:FF:000097">
    <property type="entry name" value="Proline--tRNA ligase"/>
    <property type="match status" value="1"/>
</dbReference>
<dbReference type="Gene3D" id="3.40.50.800">
    <property type="entry name" value="Anticodon-binding domain"/>
    <property type="match status" value="1"/>
</dbReference>
<dbReference type="Gene3D" id="3.30.930.10">
    <property type="entry name" value="Bira Bifunctional Protein, Domain 2"/>
    <property type="match status" value="2"/>
</dbReference>
<dbReference type="Gene3D" id="3.90.960.10">
    <property type="entry name" value="YbaK/aminoacyl-tRNA synthetase-associated domain"/>
    <property type="match status" value="1"/>
</dbReference>
<dbReference type="HAMAP" id="MF_01569">
    <property type="entry name" value="Pro_tRNA_synth_type1"/>
    <property type="match status" value="1"/>
</dbReference>
<dbReference type="InterPro" id="IPR002314">
    <property type="entry name" value="aa-tRNA-synt_IIb"/>
</dbReference>
<dbReference type="InterPro" id="IPR006195">
    <property type="entry name" value="aa-tRNA-synth_II"/>
</dbReference>
<dbReference type="InterPro" id="IPR045864">
    <property type="entry name" value="aa-tRNA-synth_II/BPL/LPL"/>
</dbReference>
<dbReference type="InterPro" id="IPR004154">
    <property type="entry name" value="Anticodon-bd"/>
</dbReference>
<dbReference type="InterPro" id="IPR036621">
    <property type="entry name" value="Anticodon-bd_dom_sf"/>
</dbReference>
<dbReference type="InterPro" id="IPR002316">
    <property type="entry name" value="Pro-tRNA-ligase_IIa"/>
</dbReference>
<dbReference type="InterPro" id="IPR004500">
    <property type="entry name" value="Pro-tRNA-synth_IIa_bac-type"/>
</dbReference>
<dbReference type="InterPro" id="IPR023717">
    <property type="entry name" value="Pro-tRNA-Synthase_IIa_type1"/>
</dbReference>
<dbReference type="InterPro" id="IPR050062">
    <property type="entry name" value="Pro-tRNA_synthetase"/>
</dbReference>
<dbReference type="InterPro" id="IPR044140">
    <property type="entry name" value="ProRS_anticodon_short"/>
</dbReference>
<dbReference type="InterPro" id="IPR033730">
    <property type="entry name" value="ProRS_core_prok"/>
</dbReference>
<dbReference type="InterPro" id="IPR036754">
    <property type="entry name" value="YbaK/aa-tRNA-synt-asso_dom_sf"/>
</dbReference>
<dbReference type="InterPro" id="IPR007214">
    <property type="entry name" value="YbaK/aa-tRNA-synth-assoc-dom"/>
</dbReference>
<dbReference type="NCBIfam" id="NF006625">
    <property type="entry name" value="PRK09194.1"/>
    <property type="match status" value="1"/>
</dbReference>
<dbReference type="NCBIfam" id="TIGR00409">
    <property type="entry name" value="proS_fam_II"/>
    <property type="match status" value="1"/>
</dbReference>
<dbReference type="PANTHER" id="PTHR42753">
    <property type="entry name" value="MITOCHONDRIAL RIBOSOME PROTEIN L39/PROLYL-TRNA LIGASE FAMILY MEMBER"/>
    <property type="match status" value="1"/>
</dbReference>
<dbReference type="PANTHER" id="PTHR42753:SF2">
    <property type="entry name" value="PROLINE--TRNA LIGASE"/>
    <property type="match status" value="1"/>
</dbReference>
<dbReference type="Pfam" id="PF03129">
    <property type="entry name" value="HGTP_anticodon"/>
    <property type="match status" value="1"/>
</dbReference>
<dbReference type="Pfam" id="PF00587">
    <property type="entry name" value="tRNA-synt_2b"/>
    <property type="match status" value="1"/>
</dbReference>
<dbReference type="Pfam" id="PF04073">
    <property type="entry name" value="tRNA_edit"/>
    <property type="match status" value="1"/>
</dbReference>
<dbReference type="PIRSF" id="PIRSF001535">
    <property type="entry name" value="ProRS_1"/>
    <property type="match status" value="1"/>
</dbReference>
<dbReference type="PRINTS" id="PR01046">
    <property type="entry name" value="TRNASYNTHPRO"/>
</dbReference>
<dbReference type="SUPFAM" id="SSF52954">
    <property type="entry name" value="Class II aaRS ABD-related"/>
    <property type="match status" value="1"/>
</dbReference>
<dbReference type="SUPFAM" id="SSF55681">
    <property type="entry name" value="Class II aaRS and biotin synthetases"/>
    <property type="match status" value="1"/>
</dbReference>
<dbReference type="SUPFAM" id="SSF55826">
    <property type="entry name" value="YbaK/ProRS associated domain"/>
    <property type="match status" value="1"/>
</dbReference>
<dbReference type="PROSITE" id="PS50862">
    <property type="entry name" value="AA_TRNA_LIGASE_II"/>
    <property type="match status" value="1"/>
</dbReference>
<sequence length="578" mass="63454">MKASRFFIGTLKEAPADAEIVSHKLMVRAGMIRRVAGGIYNYLPVGLRSIRKVEAIVREEMNRAGAIELLMPAVQPAELWQESGRWEQYGPELLRFKDRKQNEFVIGPTHEEVVTDIARNQIKSYRQMPVNFYQIQTKFRDEIRPRFGVMRGREFIMKDAYSFDKDHESLKESYKKMYDAYVRIFTRIGFEFRPVAADNGSIGGSGSHEFHVIADTGEDAIAYCPTSDFAANVEAAEALPLLASRAAPAEAMQKVATPGKAKCEAVAELMGIPLERTIKSIVLATDNEGAEPTIWLLMLRGDHDLNEIKTAKLPGLAGHRFATEAEIVEWFGTPPGYLGPIGTKKPVRVVADRTVANMSDFVVGANEVDYHIAGVNWGRDLPEPVVADIRNVKAGDPSPDGKGALDICRGIEVGHVFQLGTKYSDAMGATFIDESGKAQPMVMGCYGIGITRILGAAIEQNFDDKGIVWPEAIAPFEVVLCPMGYDRSDAVREAADKLYADLAAAGIDVILDDRGERPGVMFADWELIGVPHRLVIGERGLKDGKIEYQGRRDAEATLLPADSAAAAVAEKVRAALAR</sequence>
<proteinExistence type="inferred from homology"/>